<feature type="chain" id="PRO_0000439893" description="Mitochondrial thiamine diphosphate carrier 1">
    <location>
        <begin position="1"/>
        <end position="335"/>
    </location>
</feature>
<feature type="transmembrane region" description="Helical; Name=1" evidence="5">
    <location>
        <begin position="13"/>
        <end position="29"/>
    </location>
</feature>
<feature type="transmembrane region" description="Helical; Name=2" evidence="1">
    <location>
        <begin position="88"/>
        <end position="105"/>
    </location>
</feature>
<feature type="transmembrane region" description="Helical; Name=3" evidence="1">
    <location>
        <begin position="127"/>
        <end position="150"/>
    </location>
</feature>
<feature type="transmembrane region" description="Helical; Name=4" evidence="1">
    <location>
        <begin position="182"/>
        <end position="199"/>
    </location>
</feature>
<feature type="transmembrane region" description="Helical; Name=5" evidence="1">
    <location>
        <begin position="231"/>
        <end position="247"/>
    </location>
</feature>
<feature type="transmembrane region" description="Helical; Name=6" evidence="1">
    <location>
        <begin position="304"/>
        <end position="323"/>
    </location>
</feature>
<feature type="repeat" description="Solcar 1" evidence="2">
    <location>
        <begin position="13"/>
        <end position="111"/>
    </location>
</feature>
<feature type="repeat" description="Solcar 2" evidence="2">
    <location>
        <begin position="124"/>
        <end position="210"/>
    </location>
</feature>
<feature type="repeat" description="Solcar 3" evidence="2">
    <location>
        <begin position="232"/>
        <end position="329"/>
    </location>
</feature>
<organism>
    <name type="scientific">Arabidopsis thaliana</name>
    <name type="common">Mouse-ear cress</name>
    <dbReference type="NCBI Taxonomy" id="3702"/>
    <lineage>
        <taxon>Eukaryota</taxon>
        <taxon>Viridiplantae</taxon>
        <taxon>Streptophyta</taxon>
        <taxon>Embryophyta</taxon>
        <taxon>Tracheophyta</taxon>
        <taxon>Spermatophyta</taxon>
        <taxon>Magnoliopsida</taxon>
        <taxon>eudicotyledons</taxon>
        <taxon>Gunneridae</taxon>
        <taxon>Pentapetalae</taxon>
        <taxon>rosids</taxon>
        <taxon>malvids</taxon>
        <taxon>Brassicales</taxon>
        <taxon>Brassicaceae</taxon>
        <taxon>Camelineae</taxon>
        <taxon>Arabidopsis</taxon>
    </lineage>
</organism>
<name>TDPC1_ARATH</name>
<reference key="1">
    <citation type="journal article" date="2000" name="DNA Res.">
        <title>Structural analysis of Arabidopsis thaliana chromosome 3. II. Sequence features of the 4,251,695 bp regions covered by 90 P1, TAC and BAC clones.</title>
        <authorList>
            <person name="Kaneko T."/>
            <person name="Katoh T."/>
            <person name="Sato S."/>
            <person name="Nakamura Y."/>
            <person name="Asamizu E."/>
            <person name="Tabata S."/>
        </authorList>
    </citation>
    <scope>NUCLEOTIDE SEQUENCE [LARGE SCALE GENOMIC DNA]</scope>
    <source>
        <strain>cv. Columbia</strain>
    </source>
</reference>
<reference key="2">
    <citation type="journal article" date="2017" name="Plant J.">
        <title>Araport11: a complete reannotation of the Arabidopsis thaliana reference genome.</title>
        <authorList>
            <person name="Cheng C.Y."/>
            <person name="Krishnakumar V."/>
            <person name="Chan A.P."/>
            <person name="Thibaud-Nissen F."/>
            <person name="Schobel S."/>
            <person name="Town C.D."/>
        </authorList>
    </citation>
    <scope>GENOME REANNOTATION</scope>
    <source>
        <strain>cv. Columbia</strain>
    </source>
</reference>
<reference key="3">
    <citation type="journal article" date="2003" name="Science">
        <title>Empirical analysis of transcriptional activity in the Arabidopsis genome.</title>
        <authorList>
            <person name="Yamada K."/>
            <person name="Lim J."/>
            <person name="Dale J.M."/>
            <person name="Chen H."/>
            <person name="Shinn P."/>
            <person name="Palm C.J."/>
            <person name="Southwick A.M."/>
            <person name="Wu H.C."/>
            <person name="Kim C.J."/>
            <person name="Nguyen M."/>
            <person name="Pham P.K."/>
            <person name="Cheuk R.F."/>
            <person name="Karlin-Newmann G."/>
            <person name="Liu S.X."/>
            <person name="Lam B."/>
            <person name="Sakano H."/>
            <person name="Wu T."/>
            <person name="Yu G."/>
            <person name="Miranda M."/>
            <person name="Quach H.L."/>
            <person name="Tripp M."/>
            <person name="Chang C.H."/>
            <person name="Lee J.M."/>
            <person name="Toriumi M.J."/>
            <person name="Chan M.M."/>
            <person name="Tang C.C."/>
            <person name="Onodera C.S."/>
            <person name="Deng J.M."/>
            <person name="Akiyama K."/>
            <person name="Ansari Y."/>
            <person name="Arakawa T."/>
            <person name="Banh J."/>
            <person name="Banno F."/>
            <person name="Bowser L."/>
            <person name="Brooks S.Y."/>
            <person name="Carninci P."/>
            <person name="Chao Q."/>
            <person name="Choy N."/>
            <person name="Enju A."/>
            <person name="Goldsmith A.D."/>
            <person name="Gurjal M."/>
            <person name="Hansen N.F."/>
            <person name="Hayashizaki Y."/>
            <person name="Johnson-Hopson C."/>
            <person name="Hsuan V.W."/>
            <person name="Iida K."/>
            <person name="Karnes M."/>
            <person name="Khan S."/>
            <person name="Koesema E."/>
            <person name="Ishida J."/>
            <person name="Jiang P.X."/>
            <person name="Jones T."/>
            <person name="Kawai J."/>
            <person name="Kamiya A."/>
            <person name="Meyers C."/>
            <person name="Nakajima M."/>
            <person name="Narusaka M."/>
            <person name="Seki M."/>
            <person name="Sakurai T."/>
            <person name="Satou M."/>
            <person name="Tamse R."/>
            <person name="Vaysberg M."/>
            <person name="Wallender E.K."/>
            <person name="Wong C."/>
            <person name="Yamamura Y."/>
            <person name="Yuan S."/>
            <person name="Shinozaki K."/>
            <person name="Davis R.W."/>
            <person name="Theologis A."/>
            <person name="Ecker J.R."/>
        </authorList>
    </citation>
    <scope>NUCLEOTIDE SEQUENCE [LARGE SCALE MRNA]</scope>
    <source>
        <strain>cv. Columbia</strain>
    </source>
</reference>
<reference key="4">
    <citation type="submission" date="2002-03" db="EMBL/GenBank/DDBJ databases">
        <title>Full-length cDNA from Arabidopsis thaliana.</title>
        <authorList>
            <person name="Brover V.V."/>
            <person name="Troukhan M.E."/>
            <person name="Alexandrov N.A."/>
            <person name="Lu Y.-P."/>
            <person name="Flavell R.B."/>
            <person name="Feldmann K.A."/>
        </authorList>
    </citation>
    <scope>NUCLEOTIDE SEQUENCE [LARGE SCALE MRNA]</scope>
</reference>
<reference key="5">
    <citation type="journal article" date="2004" name="Trends Plant Sci.">
        <title>The growing family of mitochondrial carriers in Arabidopsis.</title>
        <authorList>
            <person name="Picault N."/>
            <person name="Hodges M."/>
            <person name="Palmieri L."/>
            <person name="Palmieri F."/>
        </authorList>
    </citation>
    <scope>GENE FAMILY</scope>
</reference>
<reference key="6">
    <citation type="journal article" date="2012" name="Funct. Integr. Genomics">
        <title>Identification of mitochondrial thiamin diphosphate carriers from Arabidopsis and maize.</title>
        <authorList>
            <person name="Frelin O."/>
            <person name="Agrimi G."/>
            <person name="Laera V.L."/>
            <person name="Castegna A."/>
            <person name="Richardson L.G."/>
            <person name="Mullen R.T."/>
            <person name="Lerma-Ortiz C."/>
            <person name="Palmieri F."/>
            <person name="Hanson A.D."/>
        </authorList>
    </citation>
    <scope>FUNCTION</scope>
    <scope>SUBCELLULAR LOCATION</scope>
</reference>
<protein>
    <recommendedName>
        <fullName evidence="5">Mitochondrial thiamine diphosphate carrier 1</fullName>
    </recommendedName>
</protein>
<sequence length="335" mass="36560">MSGTELDEPGKLKRAVIDASAGGVAGAISRMVTSPLDVIKIRFQVQLEPTATWALKDSQLKPKYNGLFRTTKDIFREEGLSGFWRGNVPALLMVVPYTSIQFAVLHKVKSFAAGSSKAENHAQLSPYLSYISGALAGCAATVGSYPFDLLRTVLASQGEPKVYPNMRSAFLSIVQTRGIKGLYAGLSPTLIEIIPYAGLQFGTYDTFKRWSMVYNKRYRSSSSSSTNPSDSLSSFQLFLCGLASGTVSKLVCHPLDVVKKRFQVEGLQRHPKYGARVELNAYKNMFDGLGQILRSEGWHGLYKGIVPSTIKAAPAGAVTFVAYELASDWFEANLT</sequence>
<comment type="function">
    <text evidence="3">Mitochondrial transporter that mediates uptake of thiamine diphosphate (ThDP) into mitochondria.</text>
</comment>
<comment type="subcellular location">
    <subcellularLocation>
        <location evidence="3">Mitochondrion inner membrane</location>
        <topology evidence="1">Multi-pass membrane protein</topology>
    </subcellularLocation>
</comment>
<comment type="similarity">
    <text evidence="4">Belongs to the mitochondrial carrier (TC 2.A.29) family.</text>
</comment>
<comment type="sequence caution" evidence="5">
    <conflict type="erroneous initiation">
        <sequence resource="EMBL-CDS" id="BAB03052"/>
    </conflict>
    <text>Extended N-terminus.</text>
</comment>
<gene>
    <name evidence="6" type="ordered locus">At3g21390</name>
    <name evidence="7" type="ORF">MHC9.7</name>
</gene>
<keyword id="KW-0472">Membrane</keyword>
<keyword id="KW-0496">Mitochondrion</keyword>
<keyword id="KW-0999">Mitochondrion inner membrane</keyword>
<keyword id="KW-1185">Reference proteome</keyword>
<keyword id="KW-0677">Repeat</keyword>
<keyword id="KW-0812">Transmembrane</keyword>
<keyword id="KW-1133">Transmembrane helix</keyword>
<keyword id="KW-0813">Transport</keyword>
<evidence type="ECO:0000255" key="1"/>
<evidence type="ECO:0000255" key="2">
    <source>
        <dbReference type="PROSITE-ProRule" id="PRU00282"/>
    </source>
</evidence>
<evidence type="ECO:0000269" key="3">
    <source>
    </source>
</evidence>
<evidence type="ECO:0000303" key="4">
    <source>
    </source>
</evidence>
<evidence type="ECO:0000305" key="5"/>
<evidence type="ECO:0000312" key="6">
    <source>
        <dbReference type="Araport" id="AT3G21390"/>
    </source>
</evidence>
<evidence type="ECO:0000312" key="7">
    <source>
        <dbReference type="EMBL" id="BAB03052.1"/>
    </source>
</evidence>
<accession>Q8RXZ9</accession>
<accession>Q9LIF7</accession>
<dbReference type="EMBL" id="AP001305">
    <property type="protein sequence ID" value="BAB03052.1"/>
    <property type="status" value="ALT_INIT"/>
    <property type="molecule type" value="Genomic_DNA"/>
</dbReference>
<dbReference type="EMBL" id="CP002686">
    <property type="protein sequence ID" value="AEE76504.1"/>
    <property type="molecule type" value="Genomic_DNA"/>
</dbReference>
<dbReference type="EMBL" id="AY122945">
    <property type="protein sequence ID" value="AAM67478.1"/>
    <property type="molecule type" value="mRNA"/>
</dbReference>
<dbReference type="EMBL" id="AY080592">
    <property type="protein sequence ID" value="AAL85968.1"/>
    <property type="molecule type" value="mRNA"/>
</dbReference>
<dbReference type="EMBL" id="AY087894">
    <property type="protein sequence ID" value="AAM65445.1"/>
    <property type="molecule type" value="mRNA"/>
</dbReference>
<dbReference type="RefSeq" id="NP_566683.1">
    <property type="nucleotide sequence ID" value="NM_113034.4"/>
</dbReference>
<dbReference type="SMR" id="Q8RXZ9"/>
<dbReference type="FunCoup" id="Q8RXZ9">
    <property type="interactions" value="1206"/>
</dbReference>
<dbReference type="STRING" id="3702.Q8RXZ9"/>
<dbReference type="PaxDb" id="3702-AT3G21390.1"/>
<dbReference type="ProteomicsDB" id="226621"/>
<dbReference type="EnsemblPlants" id="AT3G21390.1">
    <property type="protein sequence ID" value="AT3G21390.1"/>
    <property type="gene ID" value="AT3G21390"/>
</dbReference>
<dbReference type="GeneID" id="821693"/>
<dbReference type="Gramene" id="AT3G21390.1">
    <property type="protein sequence ID" value="AT3G21390.1"/>
    <property type="gene ID" value="AT3G21390"/>
</dbReference>
<dbReference type="KEGG" id="ath:AT3G21390"/>
<dbReference type="Araport" id="AT3G21390"/>
<dbReference type="TAIR" id="AT3G21390"/>
<dbReference type="eggNOG" id="KOG0752">
    <property type="taxonomic scope" value="Eukaryota"/>
</dbReference>
<dbReference type="HOGENOM" id="CLU_015166_10_3_1"/>
<dbReference type="InParanoid" id="Q8RXZ9"/>
<dbReference type="PRO" id="PR:Q8RXZ9"/>
<dbReference type="Proteomes" id="UP000006548">
    <property type="component" value="Chromosome 3"/>
</dbReference>
<dbReference type="ExpressionAtlas" id="Q8RXZ9">
    <property type="expression patterns" value="baseline and differential"/>
</dbReference>
<dbReference type="GO" id="GO:0005743">
    <property type="term" value="C:mitochondrial inner membrane"/>
    <property type="evidence" value="ECO:0007669"/>
    <property type="project" value="UniProtKB-SubCell"/>
</dbReference>
<dbReference type="GO" id="GO:0005739">
    <property type="term" value="C:mitochondrion"/>
    <property type="evidence" value="ECO:0000314"/>
    <property type="project" value="TAIR"/>
</dbReference>
<dbReference type="GO" id="GO:0090422">
    <property type="term" value="F:thiamine pyrophosphate transmembrane transporter activity"/>
    <property type="evidence" value="ECO:0000316"/>
    <property type="project" value="TAIR"/>
</dbReference>
<dbReference type="GO" id="GO:0030974">
    <property type="term" value="P:thiamine pyrophosphate transmembrane transport"/>
    <property type="evidence" value="ECO:0000316"/>
    <property type="project" value="TAIR"/>
</dbReference>
<dbReference type="FunFam" id="1.50.40.10:FF:000011">
    <property type="entry name" value="Mitochondrial thiamine pyrophosphate carrier 1"/>
    <property type="match status" value="1"/>
</dbReference>
<dbReference type="Gene3D" id="1.50.40.10">
    <property type="entry name" value="Mitochondrial carrier domain"/>
    <property type="match status" value="1"/>
</dbReference>
<dbReference type="InterPro" id="IPR002067">
    <property type="entry name" value="Mit_carrier"/>
</dbReference>
<dbReference type="InterPro" id="IPR018108">
    <property type="entry name" value="Mitochondrial_sb/sol_carrier"/>
</dbReference>
<dbReference type="InterPro" id="IPR023395">
    <property type="entry name" value="Mt_carrier_dom_sf"/>
</dbReference>
<dbReference type="PANTHER" id="PTHR24089">
    <property type="entry name" value="SOLUTE CARRIER FAMILY 25"/>
    <property type="match status" value="1"/>
</dbReference>
<dbReference type="Pfam" id="PF00153">
    <property type="entry name" value="Mito_carr"/>
    <property type="match status" value="3"/>
</dbReference>
<dbReference type="PRINTS" id="PR00926">
    <property type="entry name" value="MITOCARRIER"/>
</dbReference>
<dbReference type="SUPFAM" id="SSF103506">
    <property type="entry name" value="Mitochondrial carrier"/>
    <property type="match status" value="1"/>
</dbReference>
<dbReference type="PROSITE" id="PS50920">
    <property type="entry name" value="SOLCAR"/>
    <property type="match status" value="3"/>
</dbReference>
<proteinExistence type="evidence at transcript level"/>